<protein>
    <recommendedName>
        <fullName>Uncharacterized protein RP709</fullName>
    </recommendedName>
</protein>
<gene>
    <name type="ordered locus">RP709</name>
</gene>
<proteinExistence type="predicted"/>
<sequence length="98" mass="10996">MAVGRQYIEDHTEQLHKLCDNLVKYIELETKAITHEKAAEDTEVVIEVSLDLDNSSDDASIINKKAITVTSDDIANSNEDAARNTNKSHGDVLRCYYQ</sequence>
<name>Y709_RICPR</name>
<accession>Q9ZCL6</accession>
<organism>
    <name type="scientific">Rickettsia prowazekii (strain Madrid E)</name>
    <dbReference type="NCBI Taxonomy" id="272947"/>
    <lineage>
        <taxon>Bacteria</taxon>
        <taxon>Pseudomonadati</taxon>
        <taxon>Pseudomonadota</taxon>
        <taxon>Alphaproteobacteria</taxon>
        <taxon>Rickettsiales</taxon>
        <taxon>Rickettsiaceae</taxon>
        <taxon>Rickettsieae</taxon>
        <taxon>Rickettsia</taxon>
        <taxon>typhus group</taxon>
    </lineage>
</organism>
<feature type="chain" id="PRO_0000101408" description="Uncharacterized protein RP709">
    <location>
        <begin position="1"/>
        <end position="98"/>
    </location>
</feature>
<reference key="1">
    <citation type="journal article" date="1998" name="Nature">
        <title>The genome sequence of Rickettsia prowazekii and the origin of mitochondria.</title>
        <authorList>
            <person name="Andersson S.G.E."/>
            <person name="Zomorodipour A."/>
            <person name="Andersson J.O."/>
            <person name="Sicheritz-Ponten T."/>
            <person name="Alsmark U.C.M."/>
            <person name="Podowski R.M."/>
            <person name="Naeslund A.K."/>
            <person name="Eriksson A.-S."/>
            <person name="Winkler H.H."/>
            <person name="Kurland C.G."/>
        </authorList>
    </citation>
    <scope>NUCLEOTIDE SEQUENCE [LARGE SCALE GENOMIC DNA]</scope>
    <source>
        <strain>Madrid E</strain>
    </source>
</reference>
<keyword id="KW-1185">Reference proteome</keyword>
<dbReference type="EMBL" id="AJ235273">
    <property type="protein sequence ID" value="CAA15144.1"/>
    <property type="molecule type" value="Genomic_DNA"/>
</dbReference>
<dbReference type="PIR" id="H71630">
    <property type="entry name" value="H71630"/>
</dbReference>
<dbReference type="RefSeq" id="NP_221068.1">
    <property type="nucleotide sequence ID" value="NC_000963.1"/>
</dbReference>
<dbReference type="RefSeq" id="WP_004598899.1">
    <property type="nucleotide sequence ID" value="NC_000963.1"/>
</dbReference>
<dbReference type="SMR" id="Q9ZCL6"/>
<dbReference type="EnsemblBacteria" id="CAA15144">
    <property type="protein sequence ID" value="CAA15144"/>
    <property type="gene ID" value="CAA15144"/>
</dbReference>
<dbReference type="KEGG" id="rpr:RP709"/>
<dbReference type="PATRIC" id="fig|272947.5.peg.732"/>
<dbReference type="HOGENOM" id="CLU_2331877_0_0_5"/>
<dbReference type="Proteomes" id="UP000002480">
    <property type="component" value="Chromosome"/>
</dbReference>